<proteinExistence type="inferred from homology"/>
<organism>
    <name type="scientific">Macrophomina phaseolina (strain MS6)</name>
    <name type="common">Charcoal rot fungus</name>
    <dbReference type="NCBI Taxonomy" id="1126212"/>
    <lineage>
        <taxon>Eukaryota</taxon>
        <taxon>Fungi</taxon>
        <taxon>Dikarya</taxon>
        <taxon>Ascomycota</taxon>
        <taxon>Pezizomycotina</taxon>
        <taxon>Dothideomycetes</taxon>
        <taxon>Dothideomycetes incertae sedis</taxon>
        <taxon>Botryosphaeriales</taxon>
        <taxon>Botryosphaeriaceae</taxon>
        <taxon>Macrophomina</taxon>
    </lineage>
</organism>
<comment type="function">
    <text evidence="3">Transcription factor; part of the gene cluster that mediates the biosynthesis of macrophasetins, 3-decalinoyltetramic acids (DTAs) which feature a tetramate (pyrrolidine-2,4-dione) unit connected to a decalin fragment and that have potent bioactivities.</text>
</comment>
<comment type="subcellular location">
    <subcellularLocation>
        <location evidence="1">Nucleus</location>
    </subcellularLocation>
</comment>
<reference key="1">
    <citation type="journal article" date="2012" name="BMC Genomics">
        <title>Tools to kill: Genome of one of the most destructive plant pathogenic fungi Macrophomina phaseolina.</title>
        <authorList>
            <person name="Islam M.S."/>
            <person name="Haque M.S."/>
            <person name="Islam M.M."/>
            <person name="Emdad E.M."/>
            <person name="Halim A."/>
            <person name="Hossen Q.M.M."/>
            <person name="Hossain M.Z."/>
            <person name="Ahmed B."/>
            <person name="Rahim S."/>
            <person name="Rahman M.S."/>
            <person name="Alam M.M."/>
            <person name="Hou S."/>
            <person name="Wan X."/>
            <person name="Saito J.A."/>
            <person name="Alam M."/>
        </authorList>
    </citation>
    <scope>NUCLEOTIDE SEQUENCE [LARGE SCALE GENOMIC DNA]</scope>
    <source>
        <strain>MS6</strain>
    </source>
</reference>
<reference key="2">
    <citation type="journal article" date="2022" name="Front. Microbiol.">
        <title>Discovery and biosynthesis of macrophasetins from the plant pathogen fungus Macrophomina phaseolina.</title>
        <authorList>
            <person name="Yu C."/>
            <person name="Chen L."/>
            <person name="Gao Y.L."/>
            <person name="Liu J."/>
            <person name="Li P.L."/>
            <person name="Zhang M.L."/>
            <person name="Li Q."/>
            <person name="Zhang H.D."/>
            <person name="Tang M.C."/>
            <person name="Li L."/>
        </authorList>
    </citation>
    <scope>FUNCTION</scope>
</reference>
<sequence>MAENNEKYRSFRLACDRCRSHKLKCPQQPSTATGACQRCTRAKAQCTFSPRSRAIKNTQDGGSIRGKAIKKPAKRGGSQSPSAPGSPPPTATENPPQQQQSDQQKPSGSNRWDSPWGPLGTFDVLYPTPQAAFPAAAEVSPSDFSAAMSMGSTFMDCSPFAETSSGFDFQFDMDHPSGLPYYNNSTDPSLAVQSGGTEDDDVPMASTVDNSRCHEKEDCTKKLSCLAVEFQRHLALFNKHSTSHGGADKKGARTGSDGEEAQHWLSTYPIGEILCLSGDFSSILEPELYPHGRAAPVSIDETTNDARGPVVPVGQRDGHHANLSDSGTTIGLEVAHAGHPPPPHLSHHRHCQPSPPGSLPTPTSRSSTAAVMDTPTALLILNCYVSMIRIYSALFAHLHAHLRHPAPSHSSARHRHSRSTLHRRYSSGIPDPALKFGELPPAPSDDVSLRAYTAVRLLLDALQRSEELLGLPADLRCASVSGAPVGARDDDGDDDEEEEEEDTAAAILSSDSEAESLGSSVCVLPGGCGEIIGAELARAVFRQEAQMGSEQGGGGLEVLRRNIAGVKRSLRQRMAL</sequence>
<gene>
    <name evidence="4" type="primary">mpsE</name>
    <name type="ORF">MPH_07628</name>
</gene>
<feature type="chain" id="PRO_0000457833" description="Zn(2)-C6 fungal-type transcription factor mpsE">
    <location>
        <begin position="1"/>
        <end position="576"/>
    </location>
</feature>
<feature type="DNA-binding region" description="Zn(2)-C6 fungal-type" evidence="1">
    <location>
        <begin position="15"/>
        <end position="46"/>
    </location>
</feature>
<feature type="region of interest" description="Disordered" evidence="2">
    <location>
        <begin position="47"/>
        <end position="123"/>
    </location>
</feature>
<feature type="region of interest" description="Disordered" evidence="2">
    <location>
        <begin position="334"/>
        <end position="369"/>
    </location>
</feature>
<feature type="region of interest" description="Disordered" evidence="2">
    <location>
        <begin position="404"/>
        <end position="424"/>
    </location>
</feature>
<feature type="compositionally biased region" description="Polar residues" evidence="2">
    <location>
        <begin position="47"/>
        <end position="61"/>
    </location>
</feature>
<feature type="compositionally biased region" description="Low complexity" evidence="2">
    <location>
        <begin position="95"/>
        <end position="109"/>
    </location>
</feature>
<accession>K2QYX9</accession>
<protein>
    <recommendedName>
        <fullName evidence="4">Zn(2)-C6 fungal-type transcription factor mpsE</fullName>
    </recommendedName>
    <alternativeName>
        <fullName evidence="4">Macrophasetins biosynthesis cluster protein E</fullName>
    </alternativeName>
</protein>
<dbReference type="EMBL" id="AHHD01000324">
    <property type="protein sequence ID" value="EKG15181.1"/>
    <property type="molecule type" value="Genomic_DNA"/>
</dbReference>
<dbReference type="SMR" id="K2QYX9"/>
<dbReference type="STRING" id="1126212.K2QYX9"/>
<dbReference type="VEuPathDB" id="FungiDB:MPH_07628"/>
<dbReference type="eggNOG" id="ENOG502S7PT">
    <property type="taxonomic scope" value="Eukaryota"/>
</dbReference>
<dbReference type="HOGENOM" id="CLU_041815_1_0_1"/>
<dbReference type="InParanoid" id="K2QYX9"/>
<dbReference type="OrthoDB" id="4222821at2759"/>
<dbReference type="Proteomes" id="UP000007129">
    <property type="component" value="Unassembled WGS sequence"/>
</dbReference>
<dbReference type="GO" id="GO:0005634">
    <property type="term" value="C:nucleus"/>
    <property type="evidence" value="ECO:0007669"/>
    <property type="project" value="UniProtKB-SubCell"/>
</dbReference>
<dbReference type="GO" id="GO:0003677">
    <property type="term" value="F:DNA binding"/>
    <property type="evidence" value="ECO:0007669"/>
    <property type="project" value="UniProtKB-KW"/>
</dbReference>
<dbReference type="GO" id="GO:0000981">
    <property type="term" value="F:DNA-binding transcription factor activity, RNA polymerase II-specific"/>
    <property type="evidence" value="ECO:0007669"/>
    <property type="project" value="InterPro"/>
</dbReference>
<dbReference type="GO" id="GO:0008270">
    <property type="term" value="F:zinc ion binding"/>
    <property type="evidence" value="ECO:0007669"/>
    <property type="project" value="InterPro"/>
</dbReference>
<dbReference type="CDD" id="cd00067">
    <property type="entry name" value="GAL4"/>
    <property type="match status" value="1"/>
</dbReference>
<dbReference type="Gene3D" id="4.10.240.10">
    <property type="entry name" value="Zn(2)-C6 fungal-type DNA-binding domain"/>
    <property type="match status" value="1"/>
</dbReference>
<dbReference type="InterPro" id="IPR036864">
    <property type="entry name" value="Zn2-C6_fun-type_DNA-bd_sf"/>
</dbReference>
<dbReference type="InterPro" id="IPR001138">
    <property type="entry name" value="Zn2Cys6_DnaBD"/>
</dbReference>
<dbReference type="Pfam" id="PF00172">
    <property type="entry name" value="Zn_clus"/>
    <property type="match status" value="1"/>
</dbReference>
<dbReference type="SMART" id="SM00066">
    <property type="entry name" value="GAL4"/>
    <property type="match status" value="1"/>
</dbReference>
<dbReference type="SUPFAM" id="SSF57701">
    <property type="entry name" value="Zn2/Cys6 DNA-binding domain"/>
    <property type="match status" value="1"/>
</dbReference>
<dbReference type="PROSITE" id="PS00463">
    <property type="entry name" value="ZN2_CY6_FUNGAL_1"/>
    <property type="match status" value="1"/>
</dbReference>
<dbReference type="PROSITE" id="PS50048">
    <property type="entry name" value="ZN2_CY6_FUNGAL_2"/>
    <property type="match status" value="1"/>
</dbReference>
<name>MPSE_MACPH</name>
<keyword id="KW-0238">DNA-binding</keyword>
<keyword id="KW-0479">Metal-binding</keyword>
<keyword id="KW-0539">Nucleus</keyword>
<keyword id="KW-1185">Reference proteome</keyword>
<keyword id="KW-0804">Transcription</keyword>
<keyword id="KW-0805">Transcription regulation</keyword>
<keyword id="KW-0862">Zinc</keyword>
<evidence type="ECO:0000255" key="1">
    <source>
        <dbReference type="PROSITE-ProRule" id="PRU00227"/>
    </source>
</evidence>
<evidence type="ECO:0000256" key="2">
    <source>
        <dbReference type="SAM" id="MobiDB-lite"/>
    </source>
</evidence>
<evidence type="ECO:0000269" key="3">
    <source>
    </source>
</evidence>
<evidence type="ECO:0000303" key="4">
    <source>
    </source>
</evidence>